<gene>
    <name type="primary">febA</name>
    <name type="ORF">DDB_G0291990</name>
</gene>
<feature type="chain" id="PRO_0000327670" description="Eukaryotic translation initiation factor 4E-1A-binding protein homolog">
    <location>
        <begin position="1"/>
        <end position="103"/>
    </location>
</feature>
<feature type="region of interest" description="Disordered" evidence="2">
    <location>
        <begin position="49"/>
        <end position="103"/>
    </location>
</feature>
<feature type="compositionally biased region" description="Low complexity" evidence="2">
    <location>
        <begin position="76"/>
        <end position="92"/>
    </location>
</feature>
<feature type="sequence conflict" description="In Ref. 1; BAB03511." evidence="3" ref="1">
    <original>P</original>
    <variation>T</variation>
    <location>
        <position position="101"/>
    </location>
</feature>
<organism>
    <name type="scientific">Dictyostelium discoideum</name>
    <name type="common">Social amoeba</name>
    <dbReference type="NCBI Taxonomy" id="44689"/>
    <lineage>
        <taxon>Eukaryota</taxon>
        <taxon>Amoebozoa</taxon>
        <taxon>Evosea</taxon>
        <taxon>Eumycetozoa</taxon>
        <taxon>Dictyostelia</taxon>
        <taxon>Dictyosteliales</taxon>
        <taxon>Dictyosteliaceae</taxon>
        <taxon>Dictyostelium</taxon>
    </lineage>
</organism>
<comment type="function">
    <text evidence="1">Regulates assembly of the eIF4F complex.</text>
</comment>
<comment type="similarity">
    <text evidence="3">Belongs to the eIF4E-binding protein family.</text>
</comment>
<evidence type="ECO:0000250" key="1"/>
<evidence type="ECO:0000256" key="2">
    <source>
        <dbReference type="SAM" id="MobiDB-lite"/>
    </source>
</evidence>
<evidence type="ECO:0000305" key="3"/>
<reference key="1">
    <citation type="journal article" date="2001" name="Biochim. Biophys. Acta">
        <title>FebA: a gene for eukaryotic translation initiation factor 4E-binding protein (4E-BP) in Dictyostelium discoideum.</title>
        <authorList>
            <person name="Morio T."/>
            <person name="Yasukawa H."/>
            <person name="Urushihara H."/>
            <person name="Saito T."/>
            <person name="Ochiai H."/>
            <person name="Takeuchi I."/>
            <person name="Maeda M."/>
            <person name="Tanaka Y."/>
        </authorList>
    </citation>
    <scope>NUCLEOTIDE SEQUENCE [MRNA]</scope>
    <source>
        <strain>AX4</strain>
    </source>
</reference>
<reference key="2">
    <citation type="journal article" date="2005" name="Nature">
        <title>The genome of the social amoeba Dictyostelium discoideum.</title>
        <authorList>
            <person name="Eichinger L."/>
            <person name="Pachebat J.A."/>
            <person name="Gloeckner G."/>
            <person name="Rajandream M.A."/>
            <person name="Sucgang R."/>
            <person name="Berriman M."/>
            <person name="Song J."/>
            <person name="Olsen R."/>
            <person name="Szafranski K."/>
            <person name="Xu Q."/>
            <person name="Tunggal B."/>
            <person name="Kummerfeld S."/>
            <person name="Madera M."/>
            <person name="Konfortov B.A."/>
            <person name="Rivero F."/>
            <person name="Bankier A.T."/>
            <person name="Lehmann R."/>
            <person name="Hamlin N."/>
            <person name="Davies R."/>
            <person name="Gaudet P."/>
            <person name="Fey P."/>
            <person name="Pilcher K."/>
            <person name="Chen G."/>
            <person name="Saunders D."/>
            <person name="Sodergren E.J."/>
            <person name="Davis P."/>
            <person name="Kerhornou A."/>
            <person name="Nie X."/>
            <person name="Hall N."/>
            <person name="Anjard C."/>
            <person name="Hemphill L."/>
            <person name="Bason N."/>
            <person name="Farbrother P."/>
            <person name="Desany B."/>
            <person name="Just E."/>
            <person name="Morio T."/>
            <person name="Rost R."/>
            <person name="Churcher C.M."/>
            <person name="Cooper J."/>
            <person name="Haydock S."/>
            <person name="van Driessche N."/>
            <person name="Cronin A."/>
            <person name="Goodhead I."/>
            <person name="Muzny D.M."/>
            <person name="Mourier T."/>
            <person name="Pain A."/>
            <person name="Lu M."/>
            <person name="Harper D."/>
            <person name="Lindsay R."/>
            <person name="Hauser H."/>
            <person name="James K.D."/>
            <person name="Quiles M."/>
            <person name="Madan Babu M."/>
            <person name="Saito T."/>
            <person name="Buchrieser C."/>
            <person name="Wardroper A."/>
            <person name="Felder M."/>
            <person name="Thangavelu M."/>
            <person name="Johnson D."/>
            <person name="Knights A."/>
            <person name="Loulseged H."/>
            <person name="Mungall K.L."/>
            <person name="Oliver K."/>
            <person name="Price C."/>
            <person name="Quail M.A."/>
            <person name="Urushihara H."/>
            <person name="Hernandez J."/>
            <person name="Rabbinowitsch E."/>
            <person name="Steffen D."/>
            <person name="Sanders M."/>
            <person name="Ma J."/>
            <person name="Kohara Y."/>
            <person name="Sharp S."/>
            <person name="Simmonds M.N."/>
            <person name="Spiegler S."/>
            <person name="Tivey A."/>
            <person name="Sugano S."/>
            <person name="White B."/>
            <person name="Walker D."/>
            <person name="Woodward J.R."/>
            <person name="Winckler T."/>
            <person name="Tanaka Y."/>
            <person name="Shaulsky G."/>
            <person name="Schleicher M."/>
            <person name="Weinstock G.M."/>
            <person name="Rosenthal A."/>
            <person name="Cox E.C."/>
            <person name="Chisholm R.L."/>
            <person name="Gibbs R.A."/>
            <person name="Loomis W.F."/>
            <person name="Platzer M."/>
            <person name="Kay R.R."/>
            <person name="Williams J.G."/>
            <person name="Dear P.H."/>
            <person name="Noegel A.A."/>
            <person name="Barrell B.G."/>
            <person name="Kuspa A."/>
        </authorList>
    </citation>
    <scope>NUCLEOTIDE SEQUENCE [LARGE SCALE GENOMIC DNA]</scope>
    <source>
        <strain>AX4</strain>
    </source>
</reference>
<name>4EBP_DICDI</name>
<keyword id="KW-0652">Protein synthesis inhibitor</keyword>
<keyword id="KW-1185">Reference proteome</keyword>
<keyword id="KW-0810">Translation regulation</keyword>
<proteinExistence type="inferred from homology"/>
<dbReference type="EMBL" id="AB038152">
    <property type="protein sequence ID" value="BAB03511.1"/>
    <property type="molecule type" value="mRNA"/>
</dbReference>
<dbReference type="EMBL" id="AAFI02000187">
    <property type="protein sequence ID" value="EAL61351.1"/>
    <property type="molecule type" value="Genomic_DNA"/>
</dbReference>
<dbReference type="RefSeq" id="XP_629774.1">
    <property type="nucleotide sequence ID" value="XM_629772.1"/>
</dbReference>
<dbReference type="FunCoup" id="Q54DU8">
    <property type="interactions" value="38"/>
</dbReference>
<dbReference type="STRING" id="44689.Q54DU8"/>
<dbReference type="PaxDb" id="44689-DDB0191098"/>
<dbReference type="EnsemblProtists" id="EAL61351">
    <property type="protein sequence ID" value="EAL61351"/>
    <property type="gene ID" value="DDB_G0291990"/>
</dbReference>
<dbReference type="GeneID" id="8628450"/>
<dbReference type="KEGG" id="ddi:DDB_G0291990"/>
<dbReference type="dictyBase" id="DDB_G0291990">
    <property type="gene designation" value="febA"/>
</dbReference>
<dbReference type="VEuPathDB" id="AmoebaDB:DDB_G0291990"/>
<dbReference type="eggNOG" id="ENOG502S44S">
    <property type="taxonomic scope" value="Eukaryota"/>
</dbReference>
<dbReference type="HOGENOM" id="CLU_111706_0_0_1"/>
<dbReference type="InParanoid" id="Q54DU8"/>
<dbReference type="OMA" id="PPEISNF"/>
<dbReference type="Reactome" id="R-DDI-166208">
    <property type="pathway name" value="mTORC1-mediated signalling"/>
</dbReference>
<dbReference type="Reactome" id="R-DDI-72662">
    <property type="pathway name" value="Activation of the mRNA upon binding of the cap-binding complex and eIFs, and subsequent binding to 43S"/>
</dbReference>
<dbReference type="PRO" id="PR:Q54DU8"/>
<dbReference type="Proteomes" id="UP000002195">
    <property type="component" value="Chromosome 6"/>
</dbReference>
<dbReference type="GO" id="GO:0005737">
    <property type="term" value="C:cytoplasm"/>
    <property type="evidence" value="ECO:0000318"/>
    <property type="project" value="GO_Central"/>
</dbReference>
<dbReference type="GO" id="GO:0008190">
    <property type="term" value="F:eukaryotic initiation factor 4E binding"/>
    <property type="evidence" value="ECO:0000318"/>
    <property type="project" value="GO_Central"/>
</dbReference>
<dbReference type="GO" id="GO:0045947">
    <property type="term" value="P:negative regulation of translational initiation"/>
    <property type="evidence" value="ECO:0000318"/>
    <property type="project" value="GO_Central"/>
</dbReference>
<dbReference type="InterPro" id="IPR008606">
    <property type="entry name" value="EIF4EBP"/>
</dbReference>
<dbReference type="PANTHER" id="PTHR12669">
    <property type="entry name" value="EUKARYOTIC TRANSLATION INITIATION FACTOR 4E-BINDING PROTEIN"/>
    <property type="match status" value="1"/>
</dbReference>
<dbReference type="PANTHER" id="PTHR12669:SF12">
    <property type="entry name" value="EUKARYOTIC TRANSLATION INITIATION FACTOR 4E-BINDING PROTEIN"/>
    <property type="match status" value="1"/>
</dbReference>
<dbReference type="Pfam" id="PF05456">
    <property type="entry name" value="eIF_4EBP"/>
    <property type="match status" value="1"/>
</dbReference>
<accession>Q54DU8</accession>
<accession>Q9NDN6</accession>
<protein>
    <recommendedName>
        <fullName>Eukaryotic translation initiation factor 4E-1A-binding protein homolog</fullName>
        <shortName>4E-BP</shortName>
    </recommendedName>
</protein>
<sequence>MSTTRAIPVSLKDRSDIDFSTSLGGTLYGTTPGGTKIVYDRNALLQYRNSPLSKTPPPQLAHITNTELNKKVEKSTTTPTTTTPPTTTAKPKPTNDDDIFPME</sequence>